<comment type="function">
    <text evidence="1">Probable carboxypeptidase.</text>
</comment>
<comment type="subcellular location">
    <subcellularLocation>
        <location evidence="4">Secreted</location>
    </subcellularLocation>
</comment>
<comment type="tissue specificity">
    <text evidence="3">Ubiquitous.</text>
</comment>
<comment type="similarity">
    <text evidence="4">Belongs to the peptidase S10 family.</text>
</comment>
<comment type="sequence caution" evidence="4">
    <conflict type="erroneous initiation">
        <sequence resource="EMBL-CDS" id="BAD94954"/>
    </conflict>
</comment>
<dbReference type="EC" id="3.4.16.-"/>
<dbReference type="EMBL" id="AL353992">
    <property type="protein sequence ID" value="CAB89316.1"/>
    <property type="molecule type" value="Genomic_DNA"/>
</dbReference>
<dbReference type="EMBL" id="CP002686">
    <property type="protein sequence ID" value="AEE77979.1"/>
    <property type="molecule type" value="Genomic_DNA"/>
</dbReference>
<dbReference type="EMBL" id="AY050427">
    <property type="protein sequence ID" value="AAK91443.1"/>
    <property type="molecule type" value="mRNA"/>
</dbReference>
<dbReference type="EMBL" id="AY057639">
    <property type="protein sequence ID" value="AAL15270.1"/>
    <property type="molecule type" value="mRNA"/>
</dbReference>
<dbReference type="EMBL" id="AY093993">
    <property type="protein sequence ID" value="AAM16254.1"/>
    <property type="molecule type" value="mRNA"/>
</dbReference>
<dbReference type="EMBL" id="AK222084">
    <property type="protein sequence ID" value="BAD94954.1"/>
    <property type="status" value="ALT_INIT"/>
    <property type="molecule type" value="mRNA"/>
</dbReference>
<dbReference type="PIR" id="T48977">
    <property type="entry name" value="T48977"/>
</dbReference>
<dbReference type="RefSeq" id="NP_190087.1">
    <property type="nucleotide sequence ID" value="NM_114370.4"/>
</dbReference>
<dbReference type="SMR" id="Q56WF8"/>
<dbReference type="FunCoup" id="Q56WF8">
    <property type="interactions" value="606"/>
</dbReference>
<dbReference type="STRING" id="3702.Q56WF8"/>
<dbReference type="ChEMBL" id="CHEMBL1932908"/>
<dbReference type="ESTHER" id="arath-F14D17.80">
    <property type="family name" value="Carboxypeptidase_S10"/>
</dbReference>
<dbReference type="MEROPS" id="S10.A46"/>
<dbReference type="GlyCosmos" id="Q56WF8">
    <property type="glycosylation" value="2 sites, No reported glycans"/>
</dbReference>
<dbReference type="GlyGen" id="Q56WF8">
    <property type="glycosylation" value="2 sites"/>
</dbReference>
<dbReference type="PaxDb" id="3702-AT3G45010.1"/>
<dbReference type="ProteomicsDB" id="226605"/>
<dbReference type="EnsemblPlants" id="AT3G45010.1">
    <property type="protein sequence ID" value="AT3G45010.1"/>
    <property type="gene ID" value="AT3G45010"/>
</dbReference>
<dbReference type="GeneID" id="823636"/>
<dbReference type="Gramene" id="AT3G45010.1">
    <property type="protein sequence ID" value="AT3G45010.1"/>
    <property type="gene ID" value="AT3G45010"/>
</dbReference>
<dbReference type="KEGG" id="ath:AT3G45010"/>
<dbReference type="Araport" id="AT3G45010"/>
<dbReference type="TAIR" id="AT3G45010">
    <property type="gene designation" value="SCPL48"/>
</dbReference>
<dbReference type="eggNOG" id="KOG1282">
    <property type="taxonomic scope" value="Eukaryota"/>
</dbReference>
<dbReference type="HOGENOM" id="CLU_008523_10_1_1"/>
<dbReference type="InParanoid" id="Q56WF8"/>
<dbReference type="OMA" id="HFEHIDE"/>
<dbReference type="PhylomeDB" id="Q56WF8"/>
<dbReference type="PRO" id="PR:Q56WF8"/>
<dbReference type="Proteomes" id="UP000006548">
    <property type="component" value="Chromosome 3"/>
</dbReference>
<dbReference type="ExpressionAtlas" id="Q56WF8">
    <property type="expression patterns" value="baseline and differential"/>
</dbReference>
<dbReference type="GO" id="GO:0005576">
    <property type="term" value="C:extracellular region"/>
    <property type="evidence" value="ECO:0007669"/>
    <property type="project" value="UniProtKB-SubCell"/>
</dbReference>
<dbReference type="GO" id="GO:0004185">
    <property type="term" value="F:serine-type carboxypeptidase activity"/>
    <property type="evidence" value="ECO:0007669"/>
    <property type="project" value="InterPro"/>
</dbReference>
<dbReference type="GO" id="GO:0006508">
    <property type="term" value="P:proteolysis"/>
    <property type="evidence" value="ECO:0007669"/>
    <property type="project" value="UniProtKB-KW"/>
</dbReference>
<dbReference type="FunFam" id="3.40.50.1820:FF:000060">
    <property type="entry name" value="Carboxypeptidase"/>
    <property type="match status" value="1"/>
</dbReference>
<dbReference type="Gene3D" id="3.40.50.1820">
    <property type="entry name" value="alpha/beta hydrolase"/>
    <property type="match status" value="1"/>
</dbReference>
<dbReference type="InterPro" id="IPR029058">
    <property type="entry name" value="AB_hydrolase_fold"/>
</dbReference>
<dbReference type="InterPro" id="IPR001563">
    <property type="entry name" value="Peptidase_S10"/>
</dbReference>
<dbReference type="InterPro" id="IPR033124">
    <property type="entry name" value="Ser_caboxypep_his_AS"/>
</dbReference>
<dbReference type="InterPro" id="IPR018202">
    <property type="entry name" value="Ser_caboxypep_ser_AS"/>
</dbReference>
<dbReference type="PANTHER" id="PTHR11802:SF259">
    <property type="entry name" value="SERINE CARBOXYPEPTIDASE-LIKE 48"/>
    <property type="match status" value="1"/>
</dbReference>
<dbReference type="PANTHER" id="PTHR11802">
    <property type="entry name" value="SERINE PROTEASE FAMILY S10 SERINE CARBOXYPEPTIDASE"/>
    <property type="match status" value="1"/>
</dbReference>
<dbReference type="Pfam" id="PF00450">
    <property type="entry name" value="Peptidase_S10"/>
    <property type="match status" value="1"/>
</dbReference>
<dbReference type="PRINTS" id="PR00724">
    <property type="entry name" value="CRBOXYPTASEC"/>
</dbReference>
<dbReference type="SUPFAM" id="SSF53474">
    <property type="entry name" value="alpha/beta-Hydrolases"/>
    <property type="match status" value="1"/>
</dbReference>
<dbReference type="PROSITE" id="PS00560">
    <property type="entry name" value="CARBOXYPEPT_SER_HIS"/>
    <property type="match status" value="1"/>
</dbReference>
<dbReference type="PROSITE" id="PS00131">
    <property type="entry name" value="CARBOXYPEPT_SER_SER"/>
    <property type="match status" value="1"/>
</dbReference>
<sequence>MDSKTTFLTFLLCIFIFSHFSPSTSKSLTEKPLSFSPSASLPTLTAERLIKGFNLMPTRDVNVIDEEGSEAPRLVERAFDLPAAVDRRGSGGSPSVQDFGHHAGYYKLPNSKAARMFYFFFESRTNKADPVVIWLTGGPGCSSELALFYENGPFTVSNNSSLSWNEFGWDKASNLIYVDQPVGTGFSYTSDQSDLRHDEDGVSNDLYDFLQAFFKEHPQFVKNDFYITGESYAGHYIPALASRVHRGNKNKEGTHINLKGFAIGNGLTNPEIQYGAYADYALDMNLITQSDHDNLNRYYATCQQSIKECSADGGEGDACASSYTVCNNIFQKIMDIAGNVNYYDVRKQCEGSLCYDFSNMENFLNQKSVRKALGVGDIEFVSCSTAVYEAMQMDWMRNLEVGIPALLQDGIKLLVYAGEYDLICNWLGNSKWVHEMEWSGQKEFVAAATVPFHVDNKEAGLMKNYGSLTFLKVHDAGHMVPMDQPKAALQMLQNWMQGKLSTPTGRTAHQ</sequence>
<gene>
    <name type="primary">SCPL48</name>
    <name type="ordered locus">At3g45010</name>
    <name type="ORF">F14D17.80</name>
</gene>
<organism>
    <name type="scientific">Arabidopsis thaliana</name>
    <name type="common">Mouse-ear cress</name>
    <dbReference type="NCBI Taxonomy" id="3702"/>
    <lineage>
        <taxon>Eukaryota</taxon>
        <taxon>Viridiplantae</taxon>
        <taxon>Streptophyta</taxon>
        <taxon>Embryophyta</taxon>
        <taxon>Tracheophyta</taxon>
        <taxon>Spermatophyta</taxon>
        <taxon>Magnoliopsida</taxon>
        <taxon>eudicotyledons</taxon>
        <taxon>Gunneridae</taxon>
        <taxon>Pentapetalae</taxon>
        <taxon>rosids</taxon>
        <taxon>malvids</taxon>
        <taxon>Brassicales</taxon>
        <taxon>Brassicaceae</taxon>
        <taxon>Camelineae</taxon>
        <taxon>Arabidopsis</taxon>
    </lineage>
</organism>
<protein>
    <recommendedName>
        <fullName>Serine carboxypeptidase-like 48</fullName>
        <ecNumber>3.4.16.-</ecNumber>
    </recommendedName>
</protein>
<keyword id="KW-0121">Carboxypeptidase</keyword>
<keyword id="KW-1015">Disulfide bond</keyword>
<keyword id="KW-0325">Glycoprotein</keyword>
<keyword id="KW-0378">Hydrolase</keyword>
<keyword id="KW-0645">Protease</keyword>
<keyword id="KW-1185">Reference proteome</keyword>
<keyword id="KW-0964">Secreted</keyword>
<keyword id="KW-0732">Signal</keyword>
<accession>Q56WF8</accession>
<accession>Q93ZC3</accession>
<accession>Q9LXH4</accession>
<feature type="signal peptide" evidence="2">
    <location>
        <begin position="1"/>
        <end position="25"/>
    </location>
</feature>
<feature type="chain" id="PRO_0000274663" description="Serine carboxypeptidase-like 48">
    <location>
        <begin position="26"/>
        <end position="510"/>
    </location>
</feature>
<feature type="active site" evidence="1">
    <location>
        <position position="231"/>
    </location>
</feature>
<feature type="active site" evidence="1">
    <location>
        <position position="421"/>
    </location>
</feature>
<feature type="active site" evidence="1">
    <location>
        <position position="478"/>
    </location>
</feature>
<feature type="glycosylation site" description="N-linked (GlcNAc...) asparagine" evidence="2">
    <location>
        <position position="158"/>
    </location>
</feature>
<feature type="glycosylation site" description="N-linked (GlcNAc...) asparagine" evidence="2">
    <location>
        <position position="159"/>
    </location>
</feature>
<feature type="disulfide bond" evidence="1">
    <location>
        <begin position="141"/>
        <end position="383"/>
    </location>
</feature>
<feature type="disulfide bond" evidence="1">
    <location>
        <begin position="309"/>
        <end position="326"/>
    </location>
</feature>
<feature type="disulfide bond" evidence="1">
    <location>
        <begin position="349"/>
        <end position="354"/>
    </location>
</feature>
<feature type="sequence conflict" description="In Ref. 3; AAL15270." evidence="4" ref="3">
    <original>D</original>
    <variation>G</variation>
    <location>
        <position position="455"/>
    </location>
</feature>
<proteinExistence type="evidence at transcript level"/>
<evidence type="ECO:0000250" key="1"/>
<evidence type="ECO:0000255" key="2"/>
<evidence type="ECO:0000269" key="3">
    <source>
    </source>
</evidence>
<evidence type="ECO:0000305" key="4"/>
<reference key="1">
    <citation type="journal article" date="2000" name="Nature">
        <title>Sequence and analysis of chromosome 3 of the plant Arabidopsis thaliana.</title>
        <authorList>
            <person name="Salanoubat M."/>
            <person name="Lemcke K."/>
            <person name="Rieger M."/>
            <person name="Ansorge W."/>
            <person name="Unseld M."/>
            <person name="Fartmann B."/>
            <person name="Valle G."/>
            <person name="Bloecker H."/>
            <person name="Perez-Alonso M."/>
            <person name="Obermaier B."/>
            <person name="Delseny M."/>
            <person name="Boutry M."/>
            <person name="Grivell L.A."/>
            <person name="Mache R."/>
            <person name="Puigdomenech P."/>
            <person name="De Simone V."/>
            <person name="Choisne N."/>
            <person name="Artiguenave F."/>
            <person name="Robert C."/>
            <person name="Brottier P."/>
            <person name="Wincker P."/>
            <person name="Cattolico L."/>
            <person name="Weissenbach J."/>
            <person name="Saurin W."/>
            <person name="Quetier F."/>
            <person name="Schaefer M."/>
            <person name="Mueller-Auer S."/>
            <person name="Gabel C."/>
            <person name="Fuchs M."/>
            <person name="Benes V."/>
            <person name="Wurmbach E."/>
            <person name="Drzonek H."/>
            <person name="Erfle H."/>
            <person name="Jordan N."/>
            <person name="Bangert S."/>
            <person name="Wiedelmann R."/>
            <person name="Kranz H."/>
            <person name="Voss H."/>
            <person name="Holland R."/>
            <person name="Brandt P."/>
            <person name="Nyakatura G."/>
            <person name="Vezzi A."/>
            <person name="D'Angelo M."/>
            <person name="Pallavicini A."/>
            <person name="Toppo S."/>
            <person name="Simionati B."/>
            <person name="Conrad A."/>
            <person name="Hornischer K."/>
            <person name="Kauer G."/>
            <person name="Loehnert T.-H."/>
            <person name="Nordsiek G."/>
            <person name="Reichelt J."/>
            <person name="Scharfe M."/>
            <person name="Schoen O."/>
            <person name="Bargues M."/>
            <person name="Terol J."/>
            <person name="Climent J."/>
            <person name="Navarro P."/>
            <person name="Collado C."/>
            <person name="Perez-Perez A."/>
            <person name="Ottenwaelder B."/>
            <person name="Duchemin D."/>
            <person name="Cooke R."/>
            <person name="Laudie M."/>
            <person name="Berger-Llauro C."/>
            <person name="Purnelle B."/>
            <person name="Masuy D."/>
            <person name="de Haan M."/>
            <person name="Maarse A.C."/>
            <person name="Alcaraz J.-P."/>
            <person name="Cottet A."/>
            <person name="Casacuberta E."/>
            <person name="Monfort A."/>
            <person name="Argiriou A."/>
            <person name="Flores M."/>
            <person name="Liguori R."/>
            <person name="Vitale D."/>
            <person name="Mannhaupt G."/>
            <person name="Haase D."/>
            <person name="Schoof H."/>
            <person name="Rudd S."/>
            <person name="Zaccaria P."/>
            <person name="Mewes H.-W."/>
            <person name="Mayer K.F.X."/>
            <person name="Kaul S."/>
            <person name="Town C.D."/>
            <person name="Koo H.L."/>
            <person name="Tallon L.J."/>
            <person name="Jenkins J."/>
            <person name="Rooney T."/>
            <person name="Rizzo M."/>
            <person name="Walts A."/>
            <person name="Utterback T."/>
            <person name="Fujii C.Y."/>
            <person name="Shea T.P."/>
            <person name="Creasy T.H."/>
            <person name="Haas B."/>
            <person name="Maiti R."/>
            <person name="Wu D."/>
            <person name="Peterson J."/>
            <person name="Van Aken S."/>
            <person name="Pai G."/>
            <person name="Militscher J."/>
            <person name="Sellers P."/>
            <person name="Gill J.E."/>
            <person name="Feldblyum T.V."/>
            <person name="Preuss D."/>
            <person name="Lin X."/>
            <person name="Nierman W.C."/>
            <person name="Salzberg S.L."/>
            <person name="White O."/>
            <person name="Venter J.C."/>
            <person name="Fraser C.M."/>
            <person name="Kaneko T."/>
            <person name="Nakamura Y."/>
            <person name="Sato S."/>
            <person name="Kato T."/>
            <person name="Asamizu E."/>
            <person name="Sasamoto S."/>
            <person name="Kimura T."/>
            <person name="Idesawa K."/>
            <person name="Kawashima K."/>
            <person name="Kishida Y."/>
            <person name="Kiyokawa C."/>
            <person name="Kohara M."/>
            <person name="Matsumoto M."/>
            <person name="Matsuno A."/>
            <person name="Muraki A."/>
            <person name="Nakayama S."/>
            <person name="Nakazaki N."/>
            <person name="Shinpo S."/>
            <person name="Takeuchi C."/>
            <person name="Wada T."/>
            <person name="Watanabe A."/>
            <person name="Yamada M."/>
            <person name="Yasuda M."/>
            <person name="Tabata S."/>
        </authorList>
    </citation>
    <scope>NUCLEOTIDE SEQUENCE [LARGE SCALE GENOMIC DNA]</scope>
    <source>
        <strain>cv. Columbia</strain>
    </source>
</reference>
<reference key="2">
    <citation type="journal article" date="2017" name="Plant J.">
        <title>Araport11: a complete reannotation of the Arabidopsis thaliana reference genome.</title>
        <authorList>
            <person name="Cheng C.Y."/>
            <person name="Krishnakumar V."/>
            <person name="Chan A.P."/>
            <person name="Thibaud-Nissen F."/>
            <person name="Schobel S."/>
            <person name="Town C.D."/>
        </authorList>
    </citation>
    <scope>GENOME REANNOTATION</scope>
    <source>
        <strain>cv. Columbia</strain>
    </source>
</reference>
<reference key="3">
    <citation type="journal article" date="2003" name="Science">
        <title>Empirical analysis of transcriptional activity in the Arabidopsis genome.</title>
        <authorList>
            <person name="Yamada K."/>
            <person name="Lim J."/>
            <person name="Dale J.M."/>
            <person name="Chen H."/>
            <person name="Shinn P."/>
            <person name="Palm C.J."/>
            <person name="Southwick A.M."/>
            <person name="Wu H.C."/>
            <person name="Kim C.J."/>
            <person name="Nguyen M."/>
            <person name="Pham P.K."/>
            <person name="Cheuk R.F."/>
            <person name="Karlin-Newmann G."/>
            <person name="Liu S.X."/>
            <person name="Lam B."/>
            <person name="Sakano H."/>
            <person name="Wu T."/>
            <person name="Yu G."/>
            <person name="Miranda M."/>
            <person name="Quach H.L."/>
            <person name="Tripp M."/>
            <person name="Chang C.H."/>
            <person name="Lee J.M."/>
            <person name="Toriumi M.J."/>
            <person name="Chan M.M."/>
            <person name="Tang C.C."/>
            <person name="Onodera C.S."/>
            <person name="Deng J.M."/>
            <person name="Akiyama K."/>
            <person name="Ansari Y."/>
            <person name="Arakawa T."/>
            <person name="Banh J."/>
            <person name="Banno F."/>
            <person name="Bowser L."/>
            <person name="Brooks S.Y."/>
            <person name="Carninci P."/>
            <person name="Chao Q."/>
            <person name="Choy N."/>
            <person name="Enju A."/>
            <person name="Goldsmith A.D."/>
            <person name="Gurjal M."/>
            <person name="Hansen N.F."/>
            <person name="Hayashizaki Y."/>
            <person name="Johnson-Hopson C."/>
            <person name="Hsuan V.W."/>
            <person name="Iida K."/>
            <person name="Karnes M."/>
            <person name="Khan S."/>
            <person name="Koesema E."/>
            <person name="Ishida J."/>
            <person name="Jiang P.X."/>
            <person name="Jones T."/>
            <person name="Kawai J."/>
            <person name="Kamiya A."/>
            <person name="Meyers C."/>
            <person name="Nakajima M."/>
            <person name="Narusaka M."/>
            <person name="Seki M."/>
            <person name="Sakurai T."/>
            <person name="Satou M."/>
            <person name="Tamse R."/>
            <person name="Vaysberg M."/>
            <person name="Wallender E.K."/>
            <person name="Wong C."/>
            <person name="Yamamura Y."/>
            <person name="Yuan S."/>
            <person name="Shinozaki K."/>
            <person name="Davis R.W."/>
            <person name="Theologis A."/>
            <person name="Ecker J.R."/>
        </authorList>
    </citation>
    <scope>NUCLEOTIDE SEQUENCE [LARGE SCALE MRNA]</scope>
    <source>
        <strain>cv. Columbia</strain>
    </source>
</reference>
<reference key="4">
    <citation type="submission" date="2005-03" db="EMBL/GenBank/DDBJ databases">
        <title>Large-scale analysis of RIKEN Arabidopsis full-length (RAFL) cDNAs.</title>
        <authorList>
            <person name="Totoki Y."/>
            <person name="Seki M."/>
            <person name="Ishida J."/>
            <person name="Nakajima M."/>
            <person name="Enju A."/>
            <person name="Kamiya A."/>
            <person name="Narusaka M."/>
            <person name="Shin-i T."/>
            <person name="Nakagawa M."/>
            <person name="Sakamoto N."/>
            <person name="Oishi K."/>
            <person name="Kohara Y."/>
            <person name="Kobayashi M."/>
            <person name="Toyoda A."/>
            <person name="Sakaki Y."/>
            <person name="Sakurai T."/>
            <person name="Iida K."/>
            <person name="Akiyama K."/>
            <person name="Satou M."/>
            <person name="Toyoda T."/>
            <person name="Konagaya A."/>
            <person name="Carninci P."/>
            <person name="Kawai J."/>
            <person name="Hayashizaki Y."/>
            <person name="Shinozaki K."/>
        </authorList>
    </citation>
    <scope>NUCLEOTIDE SEQUENCE [LARGE SCALE MRNA] OF 330-510</scope>
    <source>
        <strain>cv. Columbia</strain>
    </source>
</reference>
<reference key="5">
    <citation type="journal article" date="2005" name="Plant Physiol.">
        <title>An expression and bioinformatics analysis of the Arabidopsis serine carboxypeptidase-like gene family.</title>
        <authorList>
            <person name="Fraser C.M."/>
            <person name="Rider L.W."/>
            <person name="Chapple C."/>
        </authorList>
    </citation>
    <scope>GENE FAMILY</scope>
    <scope>TISSUE SPECIFICITY</scope>
    <scope>NOMENCLATURE</scope>
</reference>
<name>SCP48_ARATH</name>